<feature type="chain" id="PRO_0000309619" description="Olfactory receptor 6C74">
    <location>
        <begin position="1"/>
        <end position="312"/>
    </location>
</feature>
<feature type="topological domain" description="Extracellular" evidence="1">
    <location>
        <begin position="1"/>
        <end position="23"/>
    </location>
</feature>
<feature type="transmembrane region" description="Helical; Name=1" evidence="1">
    <location>
        <begin position="24"/>
        <end position="44"/>
    </location>
</feature>
<feature type="topological domain" description="Cytoplasmic" evidence="1">
    <location>
        <begin position="45"/>
        <end position="63"/>
    </location>
</feature>
<feature type="transmembrane region" description="Helical; Name=2" evidence="1">
    <location>
        <begin position="64"/>
        <end position="84"/>
    </location>
</feature>
<feature type="topological domain" description="Extracellular" evidence="1">
    <location>
        <begin position="85"/>
        <end position="95"/>
    </location>
</feature>
<feature type="transmembrane region" description="Helical; Name=3" evidence="1">
    <location>
        <begin position="96"/>
        <end position="116"/>
    </location>
</feature>
<feature type="topological domain" description="Cytoplasmic" evidence="1">
    <location>
        <begin position="117"/>
        <end position="140"/>
    </location>
</feature>
<feature type="transmembrane region" description="Helical; Name=4" evidence="1">
    <location>
        <begin position="141"/>
        <end position="161"/>
    </location>
</feature>
<feature type="topological domain" description="Extracellular" evidence="1">
    <location>
        <begin position="162"/>
        <end position="194"/>
    </location>
</feature>
<feature type="transmembrane region" description="Helical; Name=5" evidence="1">
    <location>
        <begin position="195"/>
        <end position="215"/>
    </location>
</feature>
<feature type="topological domain" description="Cytoplasmic" evidence="1">
    <location>
        <begin position="216"/>
        <end position="237"/>
    </location>
</feature>
<feature type="transmembrane region" description="Helical; Name=6" evidence="1">
    <location>
        <begin position="238"/>
        <end position="258"/>
    </location>
</feature>
<feature type="topological domain" description="Extracellular" evidence="1">
    <location>
        <begin position="259"/>
        <end position="269"/>
    </location>
</feature>
<feature type="transmembrane region" description="Helical; Name=7" evidence="1">
    <location>
        <begin position="270"/>
        <end position="290"/>
    </location>
</feature>
<feature type="topological domain" description="Cytoplasmic" evidence="1">
    <location>
        <begin position="291"/>
        <end position="312"/>
    </location>
</feature>
<feature type="glycosylation site" description="N-linked (GlcNAc...) asparagine" evidence="1">
    <location>
        <position position="3"/>
    </location>
</feature>
<feature type="disulfide bond" evidence="2">
    <location>
        <begin position="95"/>
        <end position="177"/>
    </location>
</feature>
<feature type="sequence variant" id="VAR_036981" description="In dbSNP:rs7301705." evidence="3">
    <original>R</original>
    <variation>G</variation>
    <location>
        <position position="2"/>
    </location>
</feature>
<feature type="sequence variant" id="VAR_036982" description="In dbSNP:rs11171388.">
    <original>L</original>
    <variation>F</variation>
    <location>
        <position position="61"/>
    </location>
</feature>
<feature type="sequence variant" id="VAR_036983" description="In dbSNP:rs4388990." evidence="3">
    <original>Y</original>
    <variation>C</variation>
    <location>
        <position position="75"/>
    </location>
</feature>
<feature type="sequence variant" id="VAR_036984" description="In dbSNP:rs6581025." evidence="3">
    <original>G</original>
    <variation>D</variation>
    <location>
        <position position="86"/>
    </location>
</feature>
<feature type="sequence variant" id="VAR_036985" description="In dbSNP:rs4321039.">
    <original>R</original>
    <variation>C</variation>
    <location>
        <position position="120"/>
    </location>
</feature>
<keyword id="KW-1003">Cell membrane</keyword>
<keyword id="KW-1015">Disulfide bond</keyword>
<keyword id="KW-0297">G-protein coupled receptor</keyword>
<keyword id="KW-0325">Glycoprotein</keyword>
<keyword id="KW-0472">Membrane</keyword>
<keyword id="KW-0552">Olfaction</keyword>
<keyword id="KW-0675">Receptor</keyword>
<keyword id="KW-1185">Reference proteome</keyword>
<keyword id="KW-0716">Sensory transduction</keyword>
<keyword id="KW-0807">Transducer</keyword>
<keyword id="KW-0812">Transmembrane</keyword>
<keyword id="KW-1133">Transmembrane helix</keyword>
<proteinExistence type="evidence at transcript level"/>
<gene>
    <name type="primary">OR6C74</name>
</gene>
<accession>A6NCV1</accession>
<accession>B9EIN9</accession>
<evidence type="ECO:0000255" key="1"/>
<evidence type="ECO:0000255" key="2">
    <source>
        <dbReference type="PROSITE-ProRule" id="PRU00521"/>
    </source>
</evidence>
<evidence type="ECO:0000269" key="3">
    <source>
    </source>
</evidence>
<evidence type="ECO:0000305" key="4"/>
<protein>
    <recommendedName>
        <fullName>Olfactory receptor 6C74</fullName>
    </recommendedName>
</protein>
<comment type="function">
    <text evidence="4">Odorant receptor.</text>
</comment>
<comment type="subcellular location">
    <subcellularLocation>
        <location>Cell membrane</location>
        <topology>Multi-pass membrane protein</topology>
    </subcellularLocation>
</comment>
<comment type="similarity">
    <text evidence="2">Belongs to the G-protein coupled receptor 1 family.</text>
</comment>
<comment type="sequence caution" evidence="4">
    <conflict type="erroneous termination">
        <sequence resource="EMBL-CDS" id="AAI40755"/>
    </conflict>
    <text>Truncated C-terminus.</text>
</comment>
<comment type="online information" name="Human Olfactory Receptor Data Exploratorium (HORDE)">
    <link uri="http://genome.weizmann.ac.il/horde/card/index/symbol:OR6C74"/>
</comment>
<reference key="1">
    <citation type="journal article" date="2006" name="Nature">
        <title>The finished DNA sequence of human chromosome 12.</title>
        <authorList>
            <person name="Scherer S.E."/>
            <person name="Muzny D.M."/>
            <person name="Buhay C.J."/>
            <person name="Chen R."/>
            <person name="Cree A."/>
            <person name="Ding Y."/>
            <person name="Dugan-Rocha S."/>
            <person name="Gill R."/>
            <person name="Gunaratne P."/>
            <person name="Harris R.A."/>
            <person name="Hawes A.C."/>
            <person name="Hernandez J."/>
            <person name="Hodgson A.V."/>
            <person name="Hume J."/>
            <person name="Jackson A."/>
            <person name="Khan Z.M."/>
            <person name="Kovar-Smith C."/>
            <person name="Lewis L.R."/>
            <person name="Lozado R.J."/>
            <person name="Metzker M.L."/>
            <person name="Milosavljevic A."/>
            <person name="Miner G.R."/>
            <person name="Montgomery K.T."/>
            <person name="Morgan M.B."/>
            <person name="Nazareth L.V."/>
            <person name="Scott G."/>
            <person name="Sodergren E."/>
            <person name="Song X.-Z."/>
            <person name="Steffen D."/>
            <person name="Lovering R.C."/>
            <person name="Wheeler D.A."/>
            <person name="Worley K.C."/>
            <person name="Yuan Y."/>
            <person name="Zhang Z."/>
            <person name="Adams C.Q."/>
            <person name="Ansari-Lari M.A."/>
            <person name="Ayele M."/>
            <person name="Brown M.J."/>
            <person name="Chen G."/>
            <person name="Chen Z."/>
            <person name="Clerc-Blankenburg K.P."/>
            <person name="Davis C."/>
            <person name="Delgado O."/>
            <person name="Dinh H.H."/>
            <person name="Draper H."/>
            <person name="Gonzalez-Garay M.L."/>
            <person name="Havlak P."/>
            <person name="Jackson L.R."/>
            <person name="Jacob L.S."/>
            <person name="Kelly S.H."/>
            <person name="Li L."/>
            <person name="Li Z."/>
            <person name="Liu J."/>
            <person name="Liu W."/>
            <person name="Lu J."/>
            <person name="Maheshwari M."/>
            <person name="Nguyen B.-V."/>
            <person name="Okwuonu G.O."/>
            <person name="Pasternak S."/>
            <person name="Perez L.M."/>
            <person name="Plopper F.J.H."/>
            <person name="Santibanez J."/>
            <person name="Shen H."/>
            <person name="Tabor P.E."/>
            <person name="Verduzco D."/>
            <person name="Waldron L."/>
            <person name="Wang Q."/>
            <person name="Williams G.A."/>
            <person name="Zhang J."/>
            <person name="Zhou J."/>
            <person name="Allen C.C."/>
            <person name="Amin A.G."/>
            <person name="Anyalebechi V."/>
            <person name="Bailey M."/>
            <person name="Barbaria J.A."/>
            <person name="Bimage K.E."/>
            <person name="Bryant N.P."/>
            <person name="Burch P.E."/>
            <person name="Burkett C.E."/>
            <person name="Burrell K.L."/>
            <person name="Calderon E."/>
            <person name="Cardenas V."/>
            <person name="Carter K."/>
            <person name="Casias K."/>
            <person name="Cavazos I."/>
            <person name="Cavazos S.R."/>
            <person name="Ceasar H."/>
            <person name="Chacko J."/>
            <person name="Chan S.N."/>
            <person name="Chavez D."/>
            <person name="Christopoulos C."/>
            <person name="Chu J."/>
            <person name="Cockrell R."/>
            <person name="Cox C.D."/>
            <person name="Dang M."/>
            <person name="Dathorne S.R."/>
            <person name="David R."/>
            <person name="Davis C.M."/>
            <person name="Davy-Carroll L."/>
            <person name="Deshazo D.R."/>
            <person name="Donlin J.E."/>
            <person name="D'Souza L."/>
            <person name="Eaves K.A."/>
            <person name="Egan A."/>
            <person name="Emery-Cohen A.J."/>
            <person name="Escotto M."/>
            <person name="Flagg N."/>
            <person name="Forbes L.D."/>
            <person name="Gabisi A.M."/>
            <person name="Garza M."/>
            <person name="Hamilton C."/>
            <person name="Henderson N."/>
            <person name="Hernandez O."/>
            <person name="Hines S."/>
            <person name="Hogues M.E."/>
            <person name="Huang M."/>
            <person name="Idlebird D.G."/>
            <person name="Johnson R."/>
            <person name="Jolivet A."/>
            <person name="Jones S."/>
            <person name="Kagan R."/>
            <person name="King L.M."/>
            <person name="Leal B."/>
            <person name="Lebow H."/>
            <person name="Lee S."/>
            <person name="LeVan J.M."/>
            <person name="Lewis L.C."/>
            <person name="London P."/>
            <person name="Lorensuhewa L.M."/>
            <person name="Loulseged H."/>
            <person name="Lovett D.A."/>
            <person name="Lucier A."/>
            <person name="Lucier R.L."/>
            <person name="Ma J."/>
            <person name="Madu R.C."/>
            <person name="Mapua P."/>
            <person name="Martindale A.D."/>
            <person name="Martinez E."/>
            <person name="Massey E."/>
            <person name="Mawhiney S."/>
            <person name="Meador M.G."/>
            <person name="Mendez S."/>
            <person name="Mercado C."/>
            <person name="Mercado I.C."/>
            <person name="Merritt C.E."/>
            <person name="Miner Z.L."/>
            <person name="Minja E."/>
            <person name="Mitchell T."/>
            <person name="Mohabbat F."/>
            <person name="Mohabbat K."/>
            <person name="Montgomery B."/>
            <person name="Moore N."/>
            <person name="Morris S."/>
            <person name="Munidasa M."/>
            <person name="Ngo R.N."/>
            <person name="Nguyen N.B."/>
            <person name="Nickerson E."/>
            <person name="Nwaokelemeh O.O."/>
            <person name="Nwokenkwo S."/>
            <person name="Obregon M."/>
            <person name="Oguh M."/>
            <person name="Oragunye N."/>
            <person name="Oviedo R.J."/>
            <person name="Parish B.J."/>
            <person name="Parker D.N."/>
            <person name="Parrish J."/>
            <person name="Parks K.L."/>
            <person name="Paul H.A."/>
            <person name="Payton B.A."/>
            <person name="Perez A."/>
            <person name="Perrin W."/>
            <person name="Pickens A."/>
            <person name="Primus E.L."/>
            <person name="Pu L.-L."/>
            <person name="Puazo M."/>
            <person name="Quiles M.M."/>
            <person name="Quiroz J.B."/>
            <person name="Rabata D."/>
            <person name="Reeves K."/>
            <person name="Ruiz S.J."/>
            <person name="Shao H."/>
            <person name="Sisson I."/>
            <person name="Sonaike T."/>
            <person name="Sorelle R.P."/>
            <person name="Sutton A.E."/>
            <person name="Svatek A.F."/>
            <person name="Svetz L.A."/>
            <person name="Tamerisa K.S."/>
            <person name="Taylor T.R."/>
            <person name="Teague B."/>
            <person name="Thomas N."/>
            <person name="Thorn R.D."/>
            <person name="Trejos Z.Y."/>
            <person name="Trevino B.K."/>
            <person name="Ukegbu O.N."/>
            <person name="Urban J.B."/>
            <person name="Vasquez L.I."/>
            <person name="Vera V.A."/>
            <person name="Villasana D.M."/>
            <person name="Wang L."/>
            <person name="Ward-Moore S."/>
            <person name="Warren J.T."/>
            <person name="Wei X."/>
            <person name="White F."/>
            <person name="Williamson A.L."/>
            <person name="Wleczyk R."/>
            <person name="Wooden H.S."/>
            <person name="Wooden S.H."/>
            <person name="Yen J."/>
            <person name="Yoon L."/>
            <person name="Yoon V."/>
            <person name="Zorrilla S.E."/>
            <person name="Nelson D."/>
            <person name="Kucherlapati R."/>
            <person name="Weinstock G."/>
            <person name="Gibbs R.A."/>
        </authorList>
    </citation>
    <scope>NUCLEOTIDE SEQUENCE [LARGE SCALE GENOMIC DNA]</scope>
</reference>
<reference key="2">
    <citation type="submission" date="2005-07" db="EMBL/GenBank/DDBJ databases">
        <authorList>
            <person name="Mural R.J."/>
            <person name="Istrail S."/>
            <person name="Sutton G.G."/>
            <person name="Florea L."/>
            <person name="Halpern A.L."/>
            <person name="Mobarry C.M."/>
            <person name="Lippert R."/>
            <person name="Walenz B."/>
            <person name="Shatkay H."/>
            <person name="Dew I."/>
            <person name="Miller J.R."/>
            <person name="Flanigan M.J."/>
            <person name="Edwards N.J."/>
            <person name="Bolanos R."/>
            <person name="Fasulo D."/>
            <person name="Halldorsson B.V."/>
            <person name="Hannenhalli S."/>
            <person name="Turner R."/>
            <person name="Yooseph S."/>
            <person name="Lu F."/>
            <person name="Nusskern D.R."/>
            <person name="Shue B.C."/>
            <person name="Zheng X.H."/>
            <person name="Zhong F."/>
            <person name="Delcher A.L."/>
            <person name="Huson D.H."/>
            <person name="Kravitz S.A."/>
            <person name="Mouchard L."/>
            <person name="Reinert K."/>
            <person name="Remington K.A."/>
            <person name="Clark A.G."/>
            <person name="Waterman M.S."/>
            <person name="Eichler E.E."/>
            <person name="Adams M.D."/>
            <person name="Hunkapiller M.W."/>
            <person name="Myers E.W."/>
            <person name="Venter J.C."/>
        </authorList>
    </citation>
    <scope>NUCLEOTIDE SEQUENCE [LARGE SCALE GENOMIC DNA]</scope>
</reference>
<reference key="3">
    <citation type="journal article" date="2004" name="Genome Res.">
        <title>The status, quality, and expansion of the NIH full-length cDNA project: the Mammalian Gene Collection (MGC).</title>
        <authorList>
            <consortium name="The MGC Project Team"/>
        </authorList>
    </citation>
    <scope>NUCLEOTIDE SEQUENCE [LARGE SCALE MRNA]</scope>
    <scope>VARIANTS GLY-2; CYS-75 AND ASP-86</scope>
</reference>
<organism>
    <name type="scientific">Homo sapiens</name>
    <name type="common">Human</name>
    <dbReference type="NCBI Taxonomy" id="9606"/>
    <lineage>
        <taxon>Eukaryota</taxon>
        <taxon>Metazoa</taxon>
        <taxon>Chordata</taxon>
        <taxon>Craniata</taxon>
        <taxon>Vertebrata</taxon>
        <taxon>Euteleostomi</taxon>
        <taxon>Mammalia</taxon>
        <taxon>Eutheria</taxon>
        <taxon>Euarchontoglires</taxon>
        <taxon>Primates</taxon>
        <taxon>Haplorrhini</taxon>
        <taxon>Catarrhini</taxon>
        <taxon>Hominidae</taxon>
        <taxon>Homo</taxon>
    </lineage>
</organism>
<name>O6C74_HUMAN</name>
<sequence>MRNHTTVANFILLGLTDDPQLQVIIFLLLFFTYMLSITGNLTIITLTLLDLHLKTPMYFFLRNFSFLEVSFTTVYIPKFLVSMATGDKTISYNDCAAQLFFTILLGATEFFLLAAMSYERYVAICKPLHYTTIMSSRVCSLLVFASWMAGFLIIFPPLLMGLQLDFCAANTVDHFFCDVSPILQLSCTDTDIIELMMLLSAILTLLVTLVLVILSYTNIIRTILKIPSSQQRKKAFSTCSSHMVVVSISYGSCIFMYVKPSAKERVSLNKGIALLSTSVAPMLNPFIYTLRNKQVKDVFKHTVKKIELFSMK</sequence>
<dbReference type="EMBL" id="AC122684">
    <property type="status" value="NOT_ANNOTATED_CDS"/>
    <property type="molecule type" value="Genomic_DNA"/>
</dbReference>
<dbReference type="EMBL" id="CH471054">
    <property type="protein sequence ID" value="EAW96805.1"/>
    <property type="molecule type" value="Genomic_DNA"/>
</dbReference>
<dbReference type="EMBL" id="BC140754">
    <property type="protein sequence ID" value="AAI40755.1"/>
    <property type="status" value="ALT_SEQ"/>
    <property type="molecule type" value="mRNA"/>
</dbReference>
<dbReference type="CCDS" id="CCDS31816.1"/>
<dbReference type="RefSeq" id="NP_001005490.1">
    <property type="nucleotide sequence ID" value="NM_001005490.2"/>
</dbReference>
<dbReference type="RefSeq" id="XP_016874615.1">
    <property type="nucleotide sequence ID" value="XM_017019126.1"/>
</dbReference>
<dbReference type="SMR" id="A6NCV1"/>
<dbReference type="FunCoup" id="A6NCV1">
    <property type="interactions" value="417"/>
</dbReference>
<dbReference type="STRING" id="9606.ENSP00000342836"/>
<dbReference type="GlyCosmos" id="A6NCV1">
    <property type="glycosylation" value="1 site, No reported glycans"/>
</dbReference>
<dbReference type="GlyGen" id="A6NCV1">
    <property type="glycosylation" value="1 site"/>
</dbReference>
<dbReference type="iPTMnet" id="A6NCV1"/>
<dbReference type="PhosphoSitePlus" id="A6NCV1"/>
<dbReference type="BioMuta" id="OR6C74"/>
<dbReference type="jPOST" id="A6NCV1"/>
<dbReference type="PaxDb" id="9606-ENSP00000342836"/>
<dbReference type="PeptideAtlas" id="A6NCV1"/>
<dbReference type="TopDownProteomics" id="A6NCV1"/>
<dbReference type="Antibodypedia" id="69949">
    <property type="antibodies" value="5 antibodies from 5 providers"/>
</dbReference>
<dbReference type="DNASU" id="254783"/>
<dbReference type="Ensembl" id="ENST00000343399.5">
    <property type="protein sequence ID" value="ENSP00000368987.2"/>
    <property type="gene ID" value="ENSG00000197706.5"/>
</dbReference>
<dbReference type="GeneID" id="254783"/>
<dbReference type="KEGG" id="hsa:254783"/>
<dbReference type="MANE-Select" id="ENST00000343399.5">
    <property type="protein sequence ID" value="ENSP00000368987.2"/>
    <property type="RefSeq nucleotide sequence ID" value="NM_001005490.2"/>
    <property type="RefSeq protein sequence ID" value="NP_001005490.1"/>
</dbReference>
<dbReference type="UCSC" id="uc010spg.3">
    <property type="organism name" value="human"/>
</dbReference>
<dbReference type="AGR" id="HGNC:31303"/>
<dbReference type="CTD" id="254783"/>
<dbReference type="GeneCards" id="OR6C74"/>
<dbReference type="HGNC" id="HGNC:31303">
    <property type="gene designation" value="OR6C74"/>
</dbReference>
<dbReference type="HPA" id="ENSG00000197706">
    <property type="expression patterns" value="Not detected"/>
</dbReference>
<dbReference type="neXtProt" id="NX_A6NCV1"/>
<dbReference type="PharmGKB" id="PA134897737"/>
<dbReference type="VEuPathDB" id="HostDB:ENSG00000197706"/>
<dbReference type="eggNOG" id="ENOG502R93V">
    <property type="taxonomic scope" value="Eukaryota"/>
</dbReference>
<dbReference type="GeneTree" id="ENSGT01130000278269"/>
<dbReference type="HOGENOM" id="CLU_012526_1_1_1"/>
<dbReference type="InParanoid" id="A6NCV1"/>
<dbReference type="OMA" id="HDAFKHM"/>
<dbReference type="OrthoDB" id="9445404at2759"/>
<dbReference type="PAN-GO" id="A6NCV1">
    <property type="GO annotations" value="1 GO annotation based on evolutionary models"/>
</dbReference>
<dbReference type="PhylomeDB" id="A6NCV1"/>
<dbReference type="TreeFam" id="TF336833"/>
<dbReference type="PathwayCommons" id="A6NCV1"/>
<dbReference type="Reactome" id="R-HSA-9752946">
    <property type="pathway name" value="Expression and translocation of olfactory receptors"/>
</dbReference>
<dbReference type="BioGRID-ORCS" id="254783">
    <property type="hits" value="11 hits in 711 CRISPR screens"/>
</dbReference>
<dbReference type="GenomeRNAi" id="254783"/>
<dbReference type="Pharos" id="A6NCV1">
    <property type="development level" value="Tdark"/>
</dbReference>
<dbReference type="PRO" id="PR:A6NCV1"/>
<dbReference type="Proteomes" id="UP000005640">
    <property type="component" value="Chromosome 12"/>
</dbReference>
<dbReference type="RNAct" id="A6NCV1">
    <property type="molecule type" value="protein"/>
</dbReference>
<dbReference type="ExpressionAtlas" id="A6NCV1">
    <property type="expression patterns" value="baseline and differential"/>
</dbReference>
<dbReference type="GO" id="GO:0005886">
    <property type="term" value="C:plasma membrane"/>
    <property type="evidence" value="ECO:0007669"/>
    <property type="project" value="UniProtKB-SubCell"/>
</dbReference>
<dbReference type="GO" id="GO:0004930">
    <property type="term" value="F:G protein-coupled receptor activity"/>
    <property type="evidence" value="ECO:0007669"/>
    <property type="project" value="UniProtKB-KW"/>
</dbReference>
<dbReference type="GO" id="GO:0004984">
    <property type="term" value="F:olfactory receptor activity"/>
    <property type="evidence" value="ECO:0000318"/>
    <property type="project" value="GO_Central"/>
</dbReference>
<dbReference type="CDD" id="cd15912">
    <property type="entry name" value="7tmA_OR6C-like"/>
    <property type="match status" value="1"/>
</dbReference>
<dbReference type="FunFam" id="1.10.1220.70:FF:000001">
    <property type="entry name" value="Olfactory receptor"/>
    <property type="match status" value="1"/>
</dbReference>
<dbReference type="FunFam" id="1.20.1070.10:FF:000013">
    <property type="entry name" value="Olfactory receptor"/>
    <property type="match status" value="1"/>
</dbReference>
<dbReference type="Gene3D" id="1.20.1070.10">
    <property type="entry name" value="Rhodopsin 7-helix transmembrane proteins"/>
    <property type="match status" value="1"/>
</dbReference>
<dbReference type="InterPro" id="IPR000276">
    <property type="entry name" value="GPCR_Rhodpsn"/>
</dbReference>
<dbReference type="InterPro" id="IPR017452">
    <property type="entry name" value="GPCR_Rhodpsn_7TM"/>
</dbReference>
<dbReference type="InterPro" id="IPR000725">
    <property type="entry name" value="Olfact_rcpt"/>
</dbReference>
<dbReference type="InterPro" id="IPR047132">
    <property type="entry name" value="Olfact_rcpt_6C-like"/>
</dbReference>
<dbReference type="PANTHER" id="PTHR26454">
    <property type="entry name" value="OLFACTORY RECEPTOR"/>
    <property type="match status" value="1"/>
</dbReference>
<dbReference type="PANTHER" id="PTHR26454:SF72">
    <property type="entry name" value="OLFACTORY RECEPTOR 6C74"/>
    <property type="match status" value="1"/>
</dbReference>
<dbReference type="Pfam" id="PF13853">
    <property type="entry name" value="7tm_4"/>
    <property type="match status" value="1"/>
</dbReference>
<dbReference type="PRINTS" id="PR00237">
    <property type="entry name" value="GPCRRHODOPSN"/>
</dbReference>
<dbReference type="PRINTS" id="PR00245">
    <property type="entry name" value="OLFACTORYR"/>
</dbReference>
<dbReference type="SUPFAM" id="SSF81321">
    <property type="entry name" value="Family A G protein-coupled receptor-like"/>
    <property type="match status" value="1"/>
</dbReference>
<dbReference type="PROSITE" id="PS00237">
    <property type="entry name" value="G_PROTEIN_RECEP_F1_1"/>
    <property type="match status" value="1"/>
</dbReference>
<dbReference type="PROSITE" id="PS50262">
    <property type="entry name" value="G_PROTEIN_RECEP_F1_2"/>
    <property type="match status" value="1"/>
</dbReference>